<feature type="chain" id="PRO_0000152383" description="Imidazole glycerol phosphate synthase subunit HisH">
    <location>
        <begin position="1"/>
        <end position="213"/>
    </location>
</feature>
<feature type="domain" description="Glutamine amidotransferase type-1">
    <location>
        <begin position="3"/>
        <end position="213"/>
    </location>
</feature>
<feature type="active site" description="Nucleophile" evidence="1">
    <location>
        <position position="81"/>
    </location>
</feature>
<feature type="active site" evidence="1">
    <location>
        <position position="195"/>
    </location>
</feature>
<feature type="active site" evidence="1">
    <location>
        <position position="197"/>
    </location>
</feature>
<reference key="1">
    <citation type="journal article" date="2000" name="Int. J. Med. Microbiol.">
        <title>Cloning and functional characterization of a 30 kb gene locus required for lipopolysaccharide biosynthesis in Legionella pneumophila.</title>
        <authorList>
            <person name="Lueneberg E."/>
            <person name="Zetzmann N."/>
            <person name="Hartmann M."/>
            <person name="Knirel Y.A."/>
            <person name="Kooistra O."/>
            <person name="Zaehringer U."/>
            <person name="Helbig J."/>
            <person name="Frosch M."/>
        </authorList>
    </citation>
    <scope>NUCLEOTIDE SEQUENCE [GENOMIC DNA]</scope>
    <source>
        <strain>ATCC 43109 / NCTC 12008 / RC1 / Olda / Serogroup 1</strain>
    </source>
</reference>
<proteinExistence type="inferred from homology"/>
<protein>
    <recommendedName>
        <fullName>Imidazole glycerol phosphate synthase subunit HisH</fullName>
        <ecNumber>4.3.2.10</ecNumber>
    </recommendedName>
    <alternativeName>
        <fullName>IGP synthase glutaminase subunit</fullName>
        <ecNumber>3.5.1.2</ecNumber>
    </alternativeName>
    <alternativeName>
        <fullName>IGP synthase subunit HisH</fullName>
    </alternativeName>
    <alternativeName>
        <fullName>ImGP synthase subunit HisH</fullName>
        <shortName>IGPS subunit HisH</shortName>
    </alternativeName>
</protein>
<sequence>MSSVSIVDYGVGNLLSVARAFQYFDASVNLVSTPEEIMSADRLVLPGVGAFEDGMKGLTTLNFIEPIKQFARSGKPFLGICLGMQMMLSRSTEFGQHEGLDLIAGEVVSVPSHGVDGQLHKIPHIGWNELVSTSEGEDWCHTILKNIPLNSSVYFVHSFMAMPSNPKKRLADTLYDGQAISAVIKDENMYGCQFHPEKSGEVGLSIIQQFLQI</sequence>
<organism>
    <name type="scientific">Legionella pneumophila</name>
    <dbReference type="NCBI Taxonomy" id="446"/>
    <lineage>
        <taxon>Bacteria</taxon>
        <taxon>Pseudomonadati</taxon>
        <taxon>Pseudomonadota</taxon>
        <taxon>Gammaproteobacteria</taxon>
        <taxon>Legionellales</taxon>
        <taxon>Legionellaceae</taxon>
        <taxon>Legionella</taxon>
    </lineage>
</organism>
<comment type="function">
    <text evidence="1">IGPS catalyzes the conversion of PRFAR and glutamine to IGP, AICAR and glutamate. The HisH subunit catalyzes the hydrolysis of glutamine to glutamate and ammonia as part of the synthesis of IGP and AICAR. The resulting ammonia molecule is channeled to the active site of HisF (By similarity).</text>
</comment>
<comment type="catalytic activity">
    <reaction>
        <text>5-[(5-phospho-1-deoxy-D-ribulos-1-ylimino)methylamino]-1-(5-phospho-beta-D-ribosyl)imidazole-4-carboxamide + L-glutamine = D-erythro-1-(imidazol-4-yl)glycerol 3-phosphate + 5-amino-1-(5-phospho-beta-D-ribosyl)imidazole-4-carboxamide + L-glutamate + H(+)</text>
        <dbReference type="Rhea" id="RHEA:24793"/>
        <dbReference type="ChEBI" id="CHEBI:15378"/>
        <dbReference type="ChEBI" id="CHEBI:29985"/>
        <dbReference type="ChEBI" id="CHEBI:58278"/>
        <dbReference type="ChEBI" id="CHEBI:58359"/>
        <dbReference type="ChEBI" id="CHEBI:58475"/>
        <dbReference type="ChEBI" id="CHEBI:58525"/>
        <dbReference type="EC" id="4.3.2.10"/>
    </reaction>
</comment>
<comment type="catalytic activity">
    <reaction>
        <text>L-glutamine + H2O = L-glutamate + NH4(+)</text>
        <dbReference type="Rhea" id="RHEA:15889"/>
        <dbReference type="ChEBI" id="CHEBI:15377"/>
        <dbReference type="ChEBI" id="CHEBI:28938"/>
        <dbReference type="ChEBI" id="CHEBI:29985"/>
        <dbReference type="ChEBI" id="CHEBI:58359"/>
        <dbReference type="EC" id="3.5.1.2"/>
    </reaction>
</comment>
<comment type="pathway">
    <text>Amino-acid biosynthesis; L-histidine biosynthesis; L-histidine from 5-phospho-alpha-D-ribose 1-diphosphate: step 5/9.</text>
</comment>
<comment type="subunit">
    <text evidence="1">Heterodimer of HisH and HisF.</text>
</comment>
<comment type="subcellular location">
    <subcellularLocation>
        <location evidence="1">Cytoplasm</location>
    </subcellularLocation>
</comment>
<keyword id="KW-0028">Amino-acid biosynthesis</keyword>
<keyword id="KW-0963">Cytoplasm</keyword>
<keyword id="KW-0315">Glutamine amidotransferase</keyword>
<keyword id="KW-0368">Histidine biosynthesis</keyword>
<keyword id="KW-0378">Hydrolase</keyword>
<keyword id="KW-0456">Lyase</keyword>
<accession>Q9RDX3</accession>
<dbReference type="EC" id="4.3.2.10"/>
<dbReference type="EC" id="3.5.1.2"/>
<dbReference type="EMBL" id="AJ007311">
    <property type="protein sequence ID" value="CAB65214.1"/>
    <property type="molecule type" value="Genomic_DNA"/>
</dbReference>
<dbReference type="RefSeq" id="WP_010946487.1">
    <property type="nucleotide sequence ID" value="NZ_UGOV01000002.1"/>
</dbReference>
<dbReference type="SMR" id="Q9RDX3"/>
<dbReference type="STRING" id="91892.BIZ52_04070"/>
<dbReference type="GeneID" id="57034743"/>
<dbReference type="eggNOG" id="COG0118">
    <property type="taxonomic scope" value="Bacteria"/>
</dbReference>
<dbReference type="OMA" id="NIVGMQF"/>
<dbReference type="UniPathway" id="UPA00031">
    <property type="reaction ID" value="UER00010"/>
</dbReference>
<dbReference type="GO" id="GO:0005737">
    <property type="term" value="C:cytoplasm"/>
    <property type="evidence" value="ECO:0007669"/>
    <property type="project" value="UniProtKB-SubCell"/>
</dbReference>
<dbReference type="GO" id="GO:0004359">
    <property type="term" value="F:glutaminase activity"/>
    <property type="evidence" value="ECO:0007669"/>
    <property type="project" value="UniProtKB-EC"/>
</dbReference>
<dbReference type="GO" id="GO:0000107">
    <property type="term" value="F:imidazoleglycerol-phosphate synthase activity"/>
    <property type="evidence" value="ECO:0007669"/>
    <property type="project" value="UniProtKB-UniRule"/>
</dbReference>
<dbReference type="GO" id="GO:0016829">
    <property type="term" value="F:lyase activity"/>
    <property type="evidence" value="ECO:0007669"/>
    <property type="project" value="UniProtKB-KW"/>
</dbReference>
<dbReference type="GO" id="GO:0000105">
    <property type="term" value="P:L-histidine biosynthetic process"/>
    <property type="evidence" value="ECO:0007669"/>
    <property type="project" value="UniProtKB-UniRule"/>
</dbReference>
<dbReference type="CDD" id="cd01748">
    <property type="entry name" value="GATase1_IGP_Synthase"/>
    <property type="match status" value="1"/>
</dbReference>
<dbReference type="Gene3D" id="3.40.50.880">
    <property type="match status" value="1"/>
</dbReference>
<dbReference type="HAMAP" id="MF_00278">
    <property type="entry name" value="HisH"/>
    <property type="match status" value="1"/>
</dbReference>
<dbReference type="InterPro" id="IPR029062">
    <property type="entry name" value="Class_I_gatase-like"/>
</dbReference>
<dbReference type="InterPro" id="IPR017926">
    <property type="entry name" value="GATASE"/>
</dbReference>
<dbReference type="InterPro" id="IPR010139">
    <property type="entry name" value="Imidazole-glycPsynth_HisH"/>
</dbReference>
<dbReference type="NCBIfam" id="TIGR01855">
    <property type="entry name" value="IMP_synth_hisH"/>
    <property type="match status" value="1"/>
</dbReference>
<dbReference type="PANTHER" id="PTHR42701">
    <property type="entry name" value="IMIDAZOLE GLYCEROL PHOSPHATE SYNTHASE SUBUNIT HISH"/>
    <property type="match status" value="1"/>
</dbReference>
<dbReference type="PANTHER" id="PTHR42701:SF1">
    <property type="entry name" value="IMIDAZOLE GLYCEROL PHOSPHATE SYNTHASE SUBUNIT HISH"/>
    <property type="match status" value="1"/>
</dbReference>
<dbReference type="Pfam" id="PF00117">
    <property type="entry name" value="GATase"/>
    <property type="match status" value="1"/>
</dbReference>
<dbReference type="PIRSF" id="PIRSF000495">
    <property type="entry name" value="Amidotransf_hisH"/>
    <property type="match status" value="1"/>
</dbReference>
<dbReference type="SUPFAM" id="SSF52317">
    <property type="entry name" value="Class I glutamine amidotransferase-like"/>
    <property type="match status" value="1"/>
</dbReference>
<dbReference type="PROSITE" id="PS51273">
    <property type="entry name" value="GATASE_TYPE_1"/>
    <property type="match status" value="1"/>
</dbReference>
<gene>
    <name type="primary">hisH</name>
</gene>
<evidence type="ECO:0000250" key="1"/>
<name>HIS5_LEGPN</name>